<evidence type="ECO:0000250" key="1"/>
<evidence type="ECO:0000305" key="2"/>
<keyword id="KW-0456">Lyase</keyword>
<keyword id="KW-0520">NAD</keyword>
<keyword id="KW-1185">Reference proteome</keyword>
<gene>
    <name type="primary">TGDS</name>
</gene>
<protein>
    <recommendedName>
        <fullName>dTDP-D-glucose 4,6-dehydratase</fullName>
        <ecNumber>4.2.1.46</ecNumber>
    </recommendedName>
</protein>
<feature type="chain" id="PRO_0000328213" description="dTDP-D-glucose 4,6-dehydratase">
    <location>
        <begin position="1"/>
        <end position="355"/>
    </location>
</feature>
<feature type="active site" description="Proton donor" evidence="1">
    <location>
        <position position="143"/>
    </location>
</feature>
<feature type="active site" description="Proton acceptor" evidence="1">
    <location>
        <position position="144"/>
    </location>
</feature>
<feature type="active site" description="Proton acceptor" evidence="1">
    <location>
        <position position="166"/>
    </location>
</feature>
<feature type="binding site" evidence="1">
    <location>
        <position position="142"/>
    </location>
    <ligand>
        <name>substrate</name>
    </ligand>
</feature>
<reference key="1">
    <citation type="submission" date="2007-06" db="EMBL/GenBank/DDBJ databases">
        <authorList>
            <consortium name="NIH - Mammalian Gene Collection (MGC) project"/>
        </authorList>
    </citation>
    <scope>NUCLEOTIDE SEQUENCE [LARGE SCALE MRNA]</scope>
    <source>
        <strain>Hereford</strain>
        <tissue>Fetal pons</tissue>
    </source>
</reference>
<dbReference type="EC" id="4.2.1.46"/>
<dbReference type="EMBL" id="BC148106">
    <property type="protein sequence ID" value="AAI48107.1"/>
    <property type="molecule type" value="mRNA"/>
</dbReference>
<dbReference type="RefSeq" id="NP_001094629.1">
    <property type="nucleotide sequence ID" value="NM_001101159.1"/>
</dbReference>
<dbReference type="SMR" id="A6QLW2"/>
<dbReference type="FunCoup" id="A6QLW2">
    <property type="interactions" value="960"/>
</dbReference>
<dbReference type="STRING" id="9913.ENSBTAP00000057769"/>
<dbReference type="PaxDb" id="9913-ENSBTAP00000006984"/>
<dbReference type="Ensembl" id="ENSBTAT00000006984.6">
    <property type="protein sequence ID" value="ENSBTAP00000006984.6"/>
    <property type="gene ID" value="ENSBTAG00000005309.6"/>
</dbReference>
<dbReference type="GeneID" id="534594"/>
<dbReference type="KEGG" id="bta:534594"/>
<dbReference type="CTD" id="23483"/>
<dbReference type="VGNC" id="VGNC:35799">
    <property type="gene designation" value="TGDS"/>
</dbReference>
<dbReference type="eggNOG" id="KOG0747">
    <property type="taxonomic scope" value="Eukaryota"/>
</dbReference>
<dbReference type="GeneTree" id="ENSGT00940000159196"/>
<dbReference type="HOGENOM" id="CLU_007383_1_14_1"/>
<dbReference type="InParanoid" id="A6QLW2"/>
<dbReference type="OrthoDB" id="16464at2759"/>
<dbReference type="TreeFam" id="TF313892"/>
<dbReference type="Proteomes" id="UP000009136">
    <property type="component" value="Chromosome 12"/>
</dbReference>
<dbReference type="GO" id="GO:0008460">
    <property type="term" value="F:dTDP-glucose 4,6-dehydratase activity"/>
    <property type="evidence" value="ECO:0000318"/>
    <property type="project" value="GO_Central"/>
</dbReference>
<dbReference type="GO" id="GO:0009225">
    <property type="term" value="P:nucleotide-sugar metabolic process"/>
    <property type="evidence" value="ECO:0007669"/>
    <property type="project" value="InterPro"/>
</dbReference>
<dbReference type="CDD" id="cd05246">
    <property type="entry name" value="dTDP_GD_SDR_e"/>
    <property type="match status" value="1"/>
</dbReference>
<dbReference type="FunFam" id="3.40.50.720:FF:000304">
    <property type="entry name" value="UDP-glucose 4,6-dehydratase"/>
    <property type="match status" value="1"/>
</dbReference>
<dbReference type="Gene3D" id="3.40.50.720">
    <property type="entry name" value="NAD(P)-binding Rossmann-like Domain"/>
    <property type="match status" value="1"/>
</dbReference>
<dbReference type="Gene3D" id="3.90.25.10">
    <property type="entry name" value="UDP-galactose 4-epimerase, domain 1"/>
    <property type="match status" value="1"/>
</dbReference>
<dbReference type="InterPro" id="IPR005888">
    <property type="entry name" value="dTDP_Gluc_deHydtase"/>
</dbReference>
<dbReference type="InterPro" id="IPR016040">
    <property type="entry name" value="NAD(P)-bd_dom"/>
</dbReference>
<dbReference type="InterPro" id="IPR036291">
    <property type="entry name" value="NAD(P)-bd_dom_sf"/>
</dbReference>
<dbReference type="PANTHER" id="PTHR43000">
    <property type="entry name" value="DTDP-D-GLUCOSE 4,6-DEHYDRATASE-RELATED"/>
    <property type="match status" value="1"/>
</dbReference>
<dbReference type="Pfam" id="PF16363">
    <property type="entry name" value="GDP_Man_Dehyd"/>
    <property type="match status" value="1"/>
</dbReference>
<dbReference type="SUPFAM" id="SSF51735">
    <property type="entry name" value="NAD(P)-binding Rossmann-fold domains"/>
    <property type="match status" value="1"/>
</dbReference>
<sequence>MSVAGRAESLGPPDSFAKRVLVTGGAGFIASHMIVSLVEDYPNYMIINLDKLDYCASLKNLETISNKQNYKFIQGDICDSHFVKLLFETEKIDIVLHFAAQTHVDLSFVRAFEFTYVNVYGTHVLVSAAHEARVEKFIYVSTDEVYGGSLDKEFDESSPKQPTNPYASSKAAAECFVQSYWEQYKFPVVITRSSNVYGPHQYPEKVIPKFISLLQHNRKCCIHGTGLQTRNFLYATDVVEAFLTVLKKGKPGEIYNIGTNFEMSVLQLAKELIQLIKETNSESEMENWVDYVDDRPTNDMRYPMKSEKIHGLGWRPKVPWKEGIKKTIEWYRENFHNWKNAEKALEPFPVQPPFV</sequence>
<comment type="catalytic activity">
    <reaction>
        <text>dTDP-alpha-D-glucose = dTDP-4-dehydro-6-deoxy-alpha-D-glucose + H2O</text>
        <dbReference type="Rhea" id="RHEA:17221"/>
        <dbReference type="ChEBI" id="CHEBI:15377"/>
        <dbReference type="ChEBI" id="CHEBI:57477"/>
        <dbReference type="ChEBI" id="CHEBI:57649"/>
        <dbReference type="EC" id="4.2.1.46"/>
    </reaction>
</comment>
<comment type="cofactor">
    <cofactor evidence="1">
        <name>NAD(+)</name>
        <dbReference type="ChEBI" id="CHEBI:57540"/>
    </cofactor>
</comment>
<comment type="similarity">
    <text evidence="2">Belongs to the NAD(P)-dependent epimerase/dehydratase family. dTDP-glucose dehydratase subfamily.</text>
</comment>
<name>TGDS_BOVIN</name>
<proteinExistence type="evidence at transcript level"/>
<accession>A6QLW2</accession>
<organism>
    <name type="scientific">Bos taurus</name>
    <name type="common">Bovine</name>
    <dbReference type="NCBI Taxonomy" id="9913"/>
    <lineage>
        <taxon>Eukaryota</taxon>
        <taxon>Metazoa</taxon>
        <taxon>Chordata</taxon>
        <taxon>Craniata</taxon>
        <taxon>Vertebrata</taxon>
        <taxon>Euteleostomi</taxon>
        <taxon>Mammalia</taxon>
        <taxon>Eutheria</taxon>
        <taxon>Laurasiatheria</taxon>
        <taxon>Artiodactyla</taxon>
        <taxon>Ruminantia</taxon>
        <taxon>Pecora</taxon>
        <taxon>Bovidae</taxon>
        <taxon>Bovinae</taxon>
        <taxon>Bos</taxon>
    </lineage>
</organism>